<feature type="chain" id="PRO_1000139119" description="Uracil phosphoribosyltransferase">
    <location>
        <begin position="1"/>
        <end position="208"/>
    </location>
</feature>
<feature type="binding site" evidence="1">
    <location>
        <position position="78"/>
    </location>
    <ligand>
        <name>5-phospho-alpha-D-ribose 1-diphosphate</name>
        <dbReference type="ChEBI" id="CHEBI:58017"/>
    </ligand>
</feature>
<feature type="binding site" evidence="1">
    <location>
        <position position="103"/>
    </location>
    <ligand>
        <name>5-phospho-alpha-D-ribose 1-diphosphate</name>
        <dbReference type="ChEBI" id="CHEBI:58017"/>
    </ligand>
</feature>
<feature type="binding site" evidence="1">
    <location>
        <begin position="130"/>
        <end position="138"/>
    </location>
    <ligand>
        <name>5-phospho-alpha-D-ribose 1-diphosphate</name>
        <dbReference type="ChEBI" id="CHEBI:58017"/>
    </ligand>
</feature>
<feature type="binding site" evidence="1">
    <location>
        <position position="193"/>
    </location>
    <ligand>
        <name>uracil</name>
        <dbReference type="ChEBI" id="CHEBI:17568"/>
    </ligand>
</feature>
<feature type="binding site" evidence="1">
    <location>
        <begin position="198"/>
        <end position="200"/>
    </location>
    <ligand>
        <name>uracil</name>
        <dbReference type="ChEBI" id="CHEBI:17568"/>
    </ligand>
</feature>
<feature type="binding site" evidence="1">
    <location>
        <position position="199"/>
    </location>
    <ligand>
        <name>5-phospho-alpha-D-ribose 1-diphosphate</name>
        <dbReference type="ChEBI" id="CHEBI:58017"/>
    </ligand>
</feature>
<proteinExistence type="inferred from homology"/>
<protein>
    <recommendedName>
        <fullName evidence="1">Uracil phosphoribosyltransferase</fullName>
        <ecNumber evidence="1">2.4.2.9</ecNumber>
    </recommendedName>
    <alternativeName>
        <fullName evidence="1">UMP pyrophosphorylase</fullName>
    </alternativeName>
    <alternativeName>
        <fullName evidence="1">UPRTase</fullName>
    </alternativeName>
</protein>
<keyword id="KW-0021">Allosteric enzyme</keyword>
<keyword id="KW-0328">Glycosyltransferase</keyword>
<keyword id="KW-0342">GTP-binding</keyword>
<keyword id="KW-0460">Magnesium</keyword>
<keyword id="KW-0547">Nucleotide-binding</keyword>
<keyword id="KW-0808">Transferase</keyword>
<organism>
    <name type="scientific">Escherichia coli O7:K1 (strain IAI39 / ExPEC)</name>
    <dbReference type="NCBI Taxonomy" id="585057"/>
    <lineage>
        <taxon>Bacteria</taxon>
        <taxon>Pseudomonadati</taxon>
        <taxon>Pseudomonadota</taxon>
        <taxon>Gammaproteobacteria</taxon>
        <taxon>Enterobacterales</taxon>
        <taxon>Enterobacteriaceae</taxon>
        <taxon>Escherichia</taxon>
    </lineage>
</organism>
<dbReference type="EC" id="2.4.2.9" evidence="1"/>
<dbReference type="EMBL" id="CU928164">
    <property type="protein sequence ID" value="CAR18762.1"/>
    <property type="molecule type" value="Genomic_DNA"/>
</dbReference>
<dbReference type="RefSeq" id="WP_001295473.1">
    <property type="nucleotide sequence ID" value="NC_011750.1"/>
</dbReference>
<dbReference type="RefSeq" id="YP_002408584.1">
    <property type="nucleotide sequence ID" value="NC_011750.1"/>
</dbReference>
<dbReference type="SMR" id="B7NQN7"/>
<dbReference type="STRING" id="585057.ECIAI39_2639"/>
<dbReference type="GeneID" id="93774638"/>
<dbReference type="KEGG" id="ect:ECIAI39_2639"/>
<dbReference type="PATRIC" id="fig|585057.6.peg.2744"/>
<dbReference type="HOGENOM" id="CLU_067096_2_2_6"/>
<dbReference type="UniPathway" id="UPA00574">
    <property type="reaction ID" value="UER00636"/>
</dbReference>
<dbReference type="Proteomes" id="UP000000749">
    <property type="component" value="Chromosome"/>
</dbReference>
<dbReference type="GO" id="GO:0005525">
    <property type="term" value="F:GTP binding"/>
    <property type="evidence" value="ECO:0007669"/>
    <property type="project" value="UniProtKB-KW"/>
</dbReference>
<dbReference type="GO" id="GO:0000287">
    <property type="term" value="F:magnesium ion binding"/>
    <property type="evidence" value="ECO:0007669"/>
    <property type="project" value="UniProtKB-UniRule"/>
</dbReference>
<dbReference type="GO" id="GO:0004845">
    <property type="term" value="F:uracil phosphoribosyltransferase activity"/>
    <property type="evidence" value="ECO:0007669"/>
    <property type="project" value="UniProtKB-UniRule"/>
</dbReference>
<dbReference type="GO" id="GO:0044206">
    <property type="term" value="P:UMP salvage"/>
    <property type="evidence" value="ECO:0007669"/>
    <property type="project" value="UniProtKB-UniRule"/>
</dbReference>
<dbReference type="GO" id="GO:0006223">
    <property type="term" value="P:uracil salvage"/>
    <property type="evidence" value="ECO:0007669"/>
    <property type="project" value="InterPro"/>
</dbReference>
<dbReference type="CDD" id="cd06223">
    <property type="entry name" value="PRTases_typeI"/>
    <property type="match status" value="1"/>
</dbReference>
<dbReference type="FunFam" id="3.40.50.2020:FF:000003">
    <property type="entry name" value="Uracil phosphoribosyltransferase"/>
    <property type="match status" value="1"/>
</dbReference>
<dbReference type="Gene3D" id="3.40.50.2020">
    <property type="match status" value="1"/>
</dbReference>
<dbReference type="HAMAP" id="MF_01218_B">
    <property type="entry name" value="Upp_B"/>
    <property type="match status" value="1"/>
</dbReference>
<dbReference type="InterPro" id="IPR000836">
    <property type="entry name" value="PRibTrfase_dom"/>
</dbReference>
<dbReference type="InterPro" id="IPR029057">
    <property type="entry name" value="PRTase-like"/>
</dbReference>
<dbReference type="InterPro" id="IPR034332">
    <property type="entry name" value="Upp_B"/>
</dbReference>
<dbReference type="InterPro" id="IPR050054">
    <property type="entry name" value="UPRTase/APRTase"/>
</dbReference>
<dbReference type="InterPro" id="IPR005765">
    <property type="entry name" value="Ura_phspho_trans"/>
</dbReference>
<dbReference type="NCBIfam" id="NF001097">
    <property type="entry name" value="PRK00129.1"/>
    <property type="match status" value="1"/>
</dbReference>
<dbReference type="NCBIfam" id="TIGR01091">
    <property type="entry name" value="upp"/>
    <property type="match status" value="1"/>
</dbReference>
<dbReference type="PANTHER" id="PTHR32315">
    <property type="entry name" value="ADENINE PHOSPHORIBOSYLTRANSFERASE"/>
    <property type="match status" value="1"/>
</dbReference>
<dbReference type="PANTHER" id="PTHR32315:SF4">
    <property type="entry name" value="URACIL PHOSPHORIBOSYLTRANSFERASE, CHLOROPLASTIC"/>
    <property type="match status" value="1"/>
</dbReference>
<dbReference type="Pfam" id="PF14681">
    <property type="entry name" value="UPRTase"/>
    <property type="match status" value="1"/>
</dbReference>
<dbReference type="SUPFAM" id="SSF53271">
    <property type="entry name" value="PRTase-like"/>
    <property type="match status" value="1"/>
</dbReference>
<gene>
    <name evidence="1" type="primary">upp</name>
    <name type="ordered locus">ECIAI39_2639</name>
</gene>
<accession>B7NQN7</accession>
<comment type="function">
    <text evidence="1">Catalyzes the conversion of uracil and 5-phospho-alpha-D-ribose 1-diphosphate (PRPP) to UMP and diphosphate.</text>
</comment>
<comment type="catalytic activity">
    <reaction evidence="1">
        <text>UMP + diphosphate = 5-phospho-alpha-D-ribose 1-diphosphate + uracil</text>
        <dbReference type="Rhea" id="RHEA:13017"/>
        <dbReference type="ChEBI" id="CHEBI:17568"/>
        <dbReference type="ChEBI" id="CHEBI:33019"/>
        <dbReference type="ChEBI" id="CHEBI:57865"/>
        <dbReference type="ChEBI" id="CHEBI:58017"/>
        <dbReference type="EC" id="2.4.2.9"/>
    </reaction>
</comment>
<comment type="cofactor">
    <cofactor evidence="1">
        <name>Mg(2+)</name>
        <dbReference type="ChEBI" id="CHEBI:18420"/>
    </cofactor>
    <text evidence="1">Binds 1 Mg(2+) ion per subunit. The magnesium is bound as Mg-PRPP.</text>
</comment>
<comment type="activity regulation">
    <text evidence="1">Allosterically activated by GTP.</text>
</comment>
<comment type="pathway">
    <text evidence="1">Pyrimidine metabolism; UMP biosynthesis via salvage pathway; UMP from uracil: step 1/1.</text>
</comment>
<comment type="similarity">
    <text evidence="1">Belongs to the UPRTase family.</text>
</comment>
<sequence length="208" mass="22533">MKIVEVKHPLVKHKLGLMREQDISTKRFRELASEVGSLLTYEATADLETEKVTIEGWNGPVEIDQIKGKKITVVPILRAGLGMMDGVLENVPSARISVVGMYRNEETLEPVPYFQKLVSNIDERMALIVDPMLATGGSVIATIDLLKKAGCSSIKVLVLVAAPEGIAALEKAHPDVELYTASIDQGLNEHGYIIPGLGDAGDKIFGTK</sequence>
<evidence type="ECO:0000255" key="1">
    <source>
        <dbReference type="HAMAP-Rule" id="MF_01218"/>
    </source>
</evidence>
<name>UPP_ECO7I</name>
<reference key="1">
    <citation type="journal article" date="2009" name="PLoS Genet.">
        <title>Organised genome dynamics in the Escherichia coli species results in highly diverse adaptive paths.</title>
        <authorList>
            <person name="Touchon M."/>
            <person name="Hoede C."/>
            <person name="Tenaillon O."/>
            <person name="Barbe V."/>
            <person name="Baeriswyl S."/>
            <person name="Bidet P."/>
            <person name="Bingen E."/>
            <person name="Bonacorsi S."/>
            <person name="Bouchier C."/>
            <person name="Bouvet O."/>
            <person name="Calteau A."/>
            <person name="Chiapello H."/>
            <person name="Clermont O."/>
            <person name="Cruveiller S."/>
            <person name="Danchin A."/>
            <person name="Diard M."/>
            <person name="Dossat C."/>
            <person name="Karoui M.E."/>
            <person name="Frapy E."/>
            <person name="Garry L."/>
            <person name="Ghigo J.M."/>
            <person name="Gilles A.M."/>
            <person name="Johnson J."/>
            <person name="Le Bouguenec C."/>
            <person name="Lescat M."/>
            <person name="Mangenot S."/>
            <person name="Martinez-Jehanne V."/>
            <person name="Matic I."/>
            <person name="Nassif X."/>
            <person name="Oztas S."/>
            <person name="Petit M.A."/>
            <person name="Pichon C."/>
            <person name="Rouy Z."/>
            <person name="Ruf C.S."/>
            <person name="Schneider D."/>
            <person name="Tourret J."/>
            <person name="Vacherie B."/>
            <person name="Vallenet D."/>
            <person name="Medigue C."/>
            <person name="Rocha E.P.C."/>
            <person name="Denamur E."/>
        </authorList>
    </citation>
    <scope>NUCLEOTIDE SEQUENCE [LARGE SCALE GENOMIC DNA]</scope>
    <source>
        <strain>IAI39 / ExPEC</strain>
    </source>
</reference>